<organism>
    <name type="scientific">Homo sapiens</name>
    <name type="common">Human</name>
    <dbReference type="NCBI Taxonomy" id="9606"/>
    <lineage>
        <taxon>Eukaryota</taxon>
        <taxon>Metazoa</taxon>
        <taxon>Chordata</taxon>
        <taxon>Craniata</taxon>
        <taxon>Vertebrata</taxon>
        <taxon>Euteleostomi</taxon>
        <taxon>Mammalia</taxon>
        <taxon>Eutheria</taxon>
        <taxon>Euarchontoglires</taxon>
        <taxon>Primates</taxon>
        <taxon>Haplorrhini</taxon>
        <taxon>Catarrhini</taxon>
        <taxon>Hominidae</taxon>
        <taxon>Homo</taxon>
    </lineage>
</organism>
<sequence>MHLLPALAGVLATLVLAQPCEGTDPASPGAVETSVLRDCIAEAKLLVDAAYNWTQKSIKQRLRSGSASPMDLLSYFKQPVAATRTVVRAADYMHVALGLLEEKLQPQRSGPFNVTDVLTEPQLRLLSQASGCALRDQAERCSDKYRTITGRCNNKRRPLLGASNQALARWLPAEYEDGLSLPFGWTPSRRRNGFLLPLVRAVSNQIVRFPNERLTSDRGRALMFMQWGQFIDHDLDFSPESPARVAFTAGVDCERTCAQLPPCFPIKIPPNDPRIKNQRDCIPFFRSAPSCPQNKNRVRNQINALTSFVDASMVYGSEVSLSLRLRNRTNYLGLLAINQRFQDNGRALLPFDNLHDDPCLLTNRSARIPCFLAGDTRSTETPKLAAMHTLFMREHNRLATELRRLNPRWNGDKLYNEARKIMGAMVQIITYRDFLPLVLGKARARRTLGHYRGYCSNVDPRVANVFTLAFRFGHTMLQPFMFRLDSQYRASAPNSHVPLSSAFFASWRIVYEGGIDPILRGLMATPAKLNRQDAMLVDELRDRLFRQVRRIGLDLAALNMQRSRDHGLPGYNAWRRFCGLSQPRNLAQLSRVLKNQDLARKFLNLYGTPDNIDIWIGAIAEPLLPGARVGPLLACLFENQFRRARDGDRFWWQKRGVFTKRQRKALSRISLSRIICDNTGITTVSRDIFRANIYPRGFVNCSRIPRLNLSAWRGT</sequence>
<keyword id="KW-0106">Calcium</keyword>
<keyword id="KW-0903">Direct protein sequencing</keyword>
<keyword id="KW-0225">Disease variant</keyword>
<keyword id="KW-1015">Disulfide bond</keyword>
<keyword id="KW-0325">Glycoprotein</keyword>
<keyword id="KW-0349">Heme</keyword>
<keyword id="KW-0376">Hydrogen peroxide</keyword>
<keyword id="KW-0408">Iron</keyword>
<keyword id="KW-0479">Metal-binding</keyword>
<keyword id="KW-0944">Nitration</keyword>
<keyword id="KW-0560">Oxidoreductase</keyword>
<keyword id="KW-0575">Peroxidase</keyword>
<keyword id="KW-1267">Proteomics identification</keyword>
<keyword id="KW-1185">Reference proteome</keyword>
<keyword id="KW-0732">Signal</keyword>
<protein>
    <recommendedName>
        <fullName>Eosinophil peroxidase</fullName>
        <shortName>EPO</shortName>
        <ecNumber>1.11.1.7</ecNumber>
    </recommendedName>
    <component>
        <recommendedName>
            <fullName>Eosinophil peroxidase light chain</fullName>
        </recommendedName>
    </component>
    <component>
        <recommendedName>
            <fullName>Eosinophil peroxidase heavy chain</fullName>
        </recommendedName>
    </component>
</protein>
<evidence type="ECO:0000255" key="1"/>
<evidence type="ECO:0000255" key="2">
    <source>
        <dbReference type="PROSITE-ProRule" id="PRU00298"/>
    </source>
</evidence>
<evidence type="ECO:0000269" key="3">
    <source>
    </source>
</evidence>
<evidence type="ECO:0000269" key="4">
    <source>
    </source>
</evidence>
<evidence type="ECO:0000269" key="5">
    <source>
    </source>
</evidence>
<evidence type="ECO:0000269" key="6">
    <source>
    </source>
</evidence>
<evidence type="ECO:0000269" key="7">
    <source>
    </source>
</evidence>
<evidence type="ECO:0000269" key="8">
    <source ref="2"/>
</evidence>
<evidence type="ECO:0000305" key="9"/>
<gene>
    <name type="primary">EPX</name>
    <name type="synonym">EPER</name>
    <name type="synonym">EPO</name>
    <name type="synonym">EPP</name>
</gene>
<proteinExistence type="evidence at protein level"/>
<reference key="1">
    <citation type="journal article" date="1989" name="J. Biol. Chem.">
        <title>Molecular cloning and characterization of a chromosomal gene for human eosinophil peroxidase.</title>
        <authorList>
            <person name="Sakamaki K."/>
            <person name="Tomonaga M."/>
            <person name="Tsukui K."/>
            <person name="Nagata S."/>
        </authorList>
    </citation>
    <scope>NUCLEOTIDE SEQUENCE [GENOMIC DNA]</scope>
    <source>
        <tissue>Placenta</tissue>
    </source>
</reference>
<reference key="2">
    <citation type="submission" date="2005-05" db="EMBL/GenBank/DDBJ databases">
        <authorList>
            <consortium name="NIEHS SNPs program"/>
        </authorList>
    </citation>
    <scope>NUCLEOTIDE SEQUENCE [GENOMIC DNA]</scope>
    <scope>VARIANTS MET-40; HIS-122; GLU-249; ARG-276; LEU-292; PRO-326; LEU-358; HIS-364; THR-441; GLN-496 AND TYR-572</scope>
</reference>
<reference key="3">
    <citation type="journal article" date="1989" name="J. Exp. Med.">
        <title>Molecular cloning of the human eosinophil peroxidase. Evidence for the existence of a peroxidase multigene family.</title>
        <authorList>
            <person name="Ten R.M."/>
            <person name="Pease L.R."/>
            <person name="McKean D.J."/>
            <person name="Bell M.P."/>
            <person name="Gleich G.J."/>
        </authorList>
    </citation>
    <scope>NUCLEOTIDE SEQUENCE [MRNA] OF 13-715</scope>
    <scope>PROTEIN SEQUENCE OF 140-187 AND 251-288</scope>
    <source>
        <tissue>Blood</tissue>
    </source>
</reference>
<reference key="4">
    <citation type="journal article" date="1999" name="J. Biol. Chem.">
        <title>Biochemical evidence for heme linkage through esters with Asp-93 and Glu-241 in human eosinophil peroxidase. The ester with Asp-93 is only partially formed in vivo.</title>
        <authorList>
            <person name="Oxvig C."/>
            <person name="Thomsen A.R."/>
            <person name="Overgaard M.T."/>
            <person name="Sorensen E.S."/>
            <person name="Hoejrup P."/>
            <person name="Bjerrum M.J."/>
            <person name="Gleich G.J."/>
            <person name="Sottrup-Jensen L."/>
        </authorList>
    </citation>
    <scope>COVALENT HEME ATTACHMENT</scope>
    <scope>PARTIAL PROTEIN SEQUENCE</scope>
    <source>
        <tissue>Blood</tissue>
    </source>
</reference>
<reference key="5">
    <citation type="journal article" date="2003" name="Infect. Immun.">
        <title>Human eosinophil peroxidase induces surface alteration, killing, and lysis of Mycobacterium tuberculosis.</title>
        <authorList>
            <person name="Borelli V."/>
            <person name="Vita F."/>
            <person name="Shankar S."/>
            <person name="Soranzo M.R."/>
            <person name="Banfi E."/>
            <person name="Scialino G."/>
            <person name="Brochetta C."/>
            <person name="Zabucchi G."/>
        </authorList>
    </citation>
    <scope>FUNCTION</scope>
</reference>
<reference key="6">
    <citation type="journal article" date="2008" name="J. Biol. Chem.">
        <title>Post-translational tyrosine nitration of eosinophil granule toxins mediated by eosinophil peroxidase.</title>
        <authorList>
            <person name="Ulrich M."/>
            <person name="Petre A."/>
            <person name="Youhnovski N."/>
            <person name="Proemm F."/>
            <person name="Schirle M."/>
            <person name="Schumm M."/>
            <person name="Pero R.S."/>
            <person name="Doyle A."/>
            <person name="Checkel J."/>
            <person name="Kita H."/>
            <person name="Thiyagarajan N."/>
            <person name="Acharya K.R."/>
            <person name="Schmid-Grendelmeier P."/>
            <person name="Simon H.-U."/>
            <person name="Schwarz H."/>
            <person name="Tsutsui M."/>
            <person name="Shimokawa H."/>
            <person name="Bellon G."/>
            <person name="Lee J.J."/>
            <person name="Przybylski M."/>
            <person name="Doering G."/>
        </authorList>
    </citation>
    <scope>FUNCTION</scope>
    <scope>NITRATION AT TYR-488</scope>
</reference>
<reference key="7">
    <citation type="journal article" date="1994" name="Proc. Natl. Acad. Sci. U.S.A.">
        <title>Hereditary eosinophil peroxidase deficiency: immunochemical and spectroscopic studies and evidence for a compound heterozygosity of the defect.</title>
        <authorList>
            <person name="Romano M."/>
            <person name="Patriarca P."/>
            <person name="Melo C."/>
            <person name="Baralle F.E."/>
            <person name="Dri P."/>
        </authorList>
    </citation>
    <scope>VARIANT EPXD HIS-286</scope>
</reference>
<reference key="8">
    <citation type="journal article" date="2003" name="J. Allergy Clin. Immunol.">
        <title>High contribution contrast between the genes of eosinophil peroxidase and IL-4 receptor alpha-chain in Japanese cedar pollinosis.</title>
        <authorList>
            <person name="Nakamura H."/>
            <person name="Miyagawa K."/>
            <person name="Ogino K."/>
            <person name="Endo T."/>
            <person name="Imai T."/>
            <person name="Ozasa K."/>
            <person name="Motohashi Y."/>
            <person name="Matsuzaki I."/>
            <person name="Sasahara S."/>
            <person name="Hatta K."/>
            <person name="Eboshida A."/>
        </authorList>
    </citation>
    <scope>VARIANTS HIS-326; LEU-326 AND LEU-358</scope>
</reference>
<comment type="function">
    <text evidence="3 5">Mediates tyrosine nitration of secondary granule proteins in mature resting eosinophils. Shows significant inhibitory activity towards Mycobacterium tuberculosis H37Rv by inducing bacterial fragmentation and lysis.</text>
</comment>
<comment type="catalytic activity">
    <reaction>
        <text>2 a phenolic donor + H2O2 = 2 a phenolic radical donor + 2 H2O</text>
        <dbReference type="Rhea" id="RHEA:56136"/>
        <dbReference type="ChEBI" id="CHEBI:15377"/>
        <dbReference type="ChEBI" id="CHEBI:16240"/>
        <dbReference type="ChEBI" id="CHEBI:139520"/>
        <dbReference type="ChEBI" id="CHEBI:139521"/>
        <dbReference type="EC" id="1.11.1.7"/>
    </reaction>
</comment>
<comment type="cofactor">
    <cofactor evidence="2">
        <name>Ca(2+)</name>
        <dbReference type="ChEBI" id="CHEBI:29108"/>
    </cofactor>
    <text evidence="2">Binds 1 Ca(2+) ion per heterodimer.</text>
</comment>
<comment type="cofactor">
    <cofactor>
        <name>heme b</name>
        <dbReference type="ChEBI" id="CHEBI:60344"/>
    </cofactor>
    <text>Binds 1 heme b (iron(II)-protoporphyrin IX) covalently through ester linkages to hydroxylated methyl groups formed auto-catalytically with hydrogen peroxide at the heme C-1 and C-5 positions. The ester linkage to Asp-232 was observed in 30% of the chains.</text>
</comment>
<comment type="subunit">
    <text>Tetramer of two light chains and two heavy chains.</text>
</comment>
<comment type="subcellular location">
    <subcellularLocation>
        <location>Cytoplasmic granule</location>
    </subcellularLocation>
    <text>Cytoplasmic granules of eosinophils.</text>
</comment>
<comment type="disease" evidence="7">
    <disease id="DI-01529">
        <name>Eosinophil peroxidase deficiency</name>
        <acronym>EPXD</acronym>
        <description>A rare abnormality without clinical symptoms characterized by decreased or absent peroxidase activity and decreased volume of the granule matrix in eosinophils.</description>
        <dbReference type="MIM" id="261500"/>
    </disease>
    <text>The disease is caused by variants affecting the gene represented in this entry.</text>
</comment>
<comment type="similarity">
    <text evidence="2">Belongs to the peroxidase family. XPO subfamily.</text>
</comment>
<name>PERE_HUMAN</name>
<accession>P11678</accession>
<accession>Q4TVP3</accession>
<feature type="signal peptide" evidence="1">
    <location>
        <begin position="1"/>
        <end position="17"/>
    </location>
</feature>
<feature type="propeptide" id="PRO_0000023639" evidence="6">
    <location>
        <begin position="18"/>
        <end position="139"/>
    </location>
</feature>
<feature type="chain" id="PRO_0000023640" description="Eosinophil peroxidase light chain">
    <location>
        <begin position="140"/>
        <end position="250"/>
    </location>
</feature>
<feature type="chain" id="PRO_0000023641" description="Eosinophil peroxidase heavy chain">
    <location>
        <begin position="251"/>
        <end position="715"/>
    </location>
</feature>
<feature type="active site" description="Proton acceptor" evidence="2">
    <location>
        <position position="233"/>
    </location>
</feature>
<feature type="binding site" description="covalent; partial">
    <location>
        <position position="232"/>
    </location>
    <ligand>
        <name>heme b</name>
        <dbReference type="ChEBI" id="CHEBI:60344"/>
    </ligand>
</feature>
<feature type="binding site" evidence="2">
    <location>
        <position position="234"/>
    </location>
    <ligand>
        <name>Ca(2+)</name>
        <dbReference type="ChEBI" id="CHEBI:29108"/>
    </ligand>
</feature>
<feature type="binding site" evidence="2">
    <location>
        <position position="306"/>
    </location>
    <ligand>
        <name>Ca(2+)</name>
        <dbReference type="ChEBI" id="CHEBI:29108"/>
    </ligand>
</feature>
<feature type="binding site" evidence="2">
    <location>
        <position position="308"/>
    </location>
    <ligand>
        <name>Ca(2+)</name>
        <dbReference type="ChEBI" id="CHEBI:29108"/>
    </ligand>
</feature>
<feature type="binding site" evidence="2">
    <location>
        <position position="310"/>
    </location>
    <ligand>
        <name>Ca(2+)</name>
        <dbReference type="ChEBI" id="CHEBI:29108"/>
    </ligand>
</feature>
<feature type="binding site" evidence="2">
    <location>
        <position position="312"/>
    </location>
    <ligand>
        <name>Ca(2+)</name>
        <dbReference type="ChEBI" id="CHEBI:29108"/>
    </ligand>
</feature>
<feature type="binding site" description="covalent">
    <location>
        <position position="380"/>
    </location>
    <ligand>
        <name>heme b</name>
        <dbReference type="ChEBI" id="CHEBI:60344"/>
    </ligand>
</feature>
<feature type="binding site" description="axial binding residue" evidence="2">
    <location>
        <position position="474"/>
    </location>
    <ligand>
        <name>heme b</name>
        <dbReference type="ChEBI" id="CHEBI:60344"/>
    </ligand>
    <ligandPart>
        <name>Fe</name>
        <dbReference type="ChEBI" id="CHEBI:18248"/>
    </ligandPart>
</feature>
<feature type="site" description="Transition state stabilizer" evidence="2">
    <location>
        <position position="377"/>
    </location>
</feature>
<feature type="modified residue" description="3'-nitrotyrosine" evidence="5">
    <location>
        <position position="488"/>
    </location>
</feature>
<feature type="glycosylation site" description="N-linked (GlcNAc...) asparagine" evidence="1">
    <location>
        <position position="52"/>
    </location>
</feature>
<feature type="glycosylation site" description="N-linked (GlcNAc...) asparagine" evidence="1">
    <location>
        <position position="113"/>
    </location>
</feature>
<feature type="glycosylation site" description="N-linked (GlcNAc...) asparagine" evidence="1">
    <location>
        <position position="327"/>
    </location>
</feature>
<feature type="glycosylation site" description="N-linked (GlcNAc...) asparagine" evidence="1">
    <location>
        <position position="363"/>
    </location>
</feature>
<feature type="glycosylation site" description="N-linked (GlcNAc...) asparagine" evidence="1">
    <location>
        <position position="700"/>
    </location>
</feature>
<feature type="glycosylation site" description="N-linked (GlcNAc...) asparagine" evidence="1">
    <location>
        <position position="708"/>
    </location>
</feature>
<feature type="disulfide bond" evidence="2">
    <location>
        <begin position="141"/>
        <end position="152"/>
    </location>
</feature>
<feature type="disulfide bond" evidence="2">
    <location>
        <begin position="253"/>
        <end position="263"/>
    </location>
</feature>
<feature type="disulfide bond" evidence="2">
    <location>
        <begin position="257"/>
        <end position="281"/>
    </location>
</feature>
<feature type="disulfide bond" evidence="2">
    <location>
        <begin position="359"/>
        <end position="370"/>
    </location>
</feature>
<feature type="disulfide bond" evidence="2">
    <location>
        <begin position="578"/>
        <end position="635"/>
    </location>
</feature>
<feature type="disulfide bond" evidence="2">
    <location>
        <begin position="676"/>
        <end position="701"/>
    </location>
</feature>
<feature type="sequence variant" id="VAR_050485" description="In dbSNP:rs34553736.">
    <original>V</original>
    <variation>I</variation>
    <location>
        <position position="35"/>
    </location>
</feature>
<feature type="sequence variant" id="VAR_025138" description="In dbSNP:rs11079339." evidence="8">
    <original>I</original>
    <variation>M</variation>
    <location>
        <position position="40"/>
    </location>
</feature>
<feature type="sequence variant" id="VAR_025139" description="In dbSNP:rs11652709." evidence="8">
    <original>Q</original>
    <variation>H</variation>
    <location>
        <position position="122"/>
    </location>
</feature>
<feature type="sequence variant" id="VAR_025140" description="In dbSNP:rs35896669." evidence="8">
    <original>A</original>
    <variation>E</variation>
    <location>
        <position position="249"/>
    </location>
</feature>
<feature type="sequence variant" id="VAR_025141" description="In dbSNP:rs35074452." evidence="8">
    <original>K</original>
    <variation>R</variation>
    <location>
        <position position="276"/>
    </location>
</feature>
<feature type="sequence variant" id="VAR_015376" description="In EPXD; dbSNP:rs121434566." evidence="7">
    <original>R</original>
    <variation>H</variation>
    <location>
        <position position="286"/>
    </location>
</feature>
<feature type="sequence variant" id="VAR_025142" description="In dbSNP:rs33971258." evidence="8">
    <original>P</original>
    <variation>L</variation>
    <location>
        <position position="292"/>
    </location>
</feature>
<feature type="sequence variant" id="VAR_060197" description="In dbSNP:rs35832094." evidence="4">
    <original>R</original>
    <variation>H</variation>
    <location>
        <position position="326"/>
    </location>
</feature>
<feature type="sequence variant" id="VAR_060198" evidence="4">
    <original>R</original>
    <variation>L</variation>
    <location>
        <position position="326"/>
    </location>
</feature>
<feature type="sequence variant" id="VAR_025143" description="In dbSNP:rs35832094." evidence="8">
    <original>R</original>
    <variation>P</variation>
    <location>
        <position position="326"/>
    </location>
</feature>
<feature type="sequence variant" id="VAR_025144" description="Probable risk factor for Japanese cedar pollinosis; dbSNP:rs35135976." evidence="4 8">
    <original>P</original>
    <variation>L</variation>
    <location>
        <position position="358"/>
    </location>
</feature>
<feature type="sequence variant" id="VAR_025145" description="In dbSNP:rs35232062." evidence="8">
    <original>R</original>
    <variation>H</variation>
    <location>
        <position position="364"/>
    </location>
</feature>
<feature type="sequence variant" id="VAR_025146" description="In dbSNP:rs35750729." evidence="8">
    <original>K</original>
    <variation>T</variation>
    <location>
        <position position="441"/>
    </location>
</feature>
<feature type="sequence variant" id="VAR_050486" description="In dbSNP:rs34817773.">
    <original>V</original>
    <variation>M</variation>
    <location>
        <position position="458"/>
    </location>
</feature>
<feature type="sequence variant" id="VAR_025147" description="In dbSNP:rs33955150." evidence="8">
    <original>H</original>
    <variation>Q</variation>
    <location>
        <position position="496"/>
    </location>
</feature>
<feature type="sequence variant" id="VAR_020031" description="In dbSNP:rs2302311." evidence="8">
    <original>N</original>
    <variation>Y</variation>
    <location>
        <position position="572"/>
    </location>
</feature>
<feature type="sequence conflict" description="In Ref. 3; AA sequence." evidence="9" ref="3">
    <original>TLVLAQ</original>
    <variation>EFRGQD</variation>
    <location>
        <begin position="13"/>
        <end position="18"/>
    </location>
</feature>
<feature type="sequence conflict" description="In Ref. 3; AA sequence." evidence="9" ref="3">
    <original>E</original>
    <variation>Q</variation>
    <location>
        <position position="21"/>
    </location>
</feature>
<feature type="sequence conflict" description="In Ref. 3; CAA32530." evidence="9" ref="3">
    <original>N</original>
    <variation>I</variation>
    <location>
        <position position="113"/>
    </location>
</feature>
<feature type="sequence conflict" description="In Ref. 3; AA sequence." evidence="9" ref="3">
    <original>S</original>
    <variation>C</variation>
    <location>
        <position position="163"/>
    </location>
</feature>
<feature type="sequence conflict" description="In Ref. 3; AA sequence." evidence="9" ref="3">
    <original>RDGDRFWWQKRGVFTK</original>
    <variation>ETETGSGGRTRCFHQ</variation>
    <location>
        <begin position="645"/>
        <end position="660"/>
    </location>
</feature>
<dbReference type="EC" id="1.11.1.7"/>
<dbReference type="EMBL" id="M29913">
    <property type="protein sequence ID" value="AAA58458.1"/>
    <property type="molecule type" value="Genomic_DNA"/>
</dbReference>
<dbReference type="EMBL" id="M29904">
    <property type="protein sequence ID" value="AAA58458.1"/>
    <property type="status" value="JOINED"/>
    <property type="molecule type" value="Genomic_DNA"/>
</dbReference>
<dbReference type="EMBL" id="M29905">
    <property type="protein sequence ID" value="AAA58458.1"/>
    <property type="status" value="JOINED"/>
    <property type="molecule type" value="Genomic_DNA"/>
</dbReference>
<dbReference type="EMBL" id="M29906">
    <property type="protein sequence ID" value="AAA58458.1"/>
    <property type="status" value="JOINED"/>
    <property type="molecule type" value="Genomic_DNA"/>
</dbReference>
<dbReference type="EMBL" id="M29907">
    <property type="protein sequence ID" value="AAA58458.1"/>
    <property type="status" value="JOINED"/>
    <property type="molecule type" value="Genomic_DNA"/>
</dbReference>
<dbReference type="EMBL" id="M29908">
    <property type="protein sequence ID" value="AAA58458.1"/>
    <property type="status" value="JOINED"/>
    <property type="molecule type" value="Genomic_DNA"/>
</dbReference>
<dbReference type="EMBL" id="M29909">
    <property type="protein sequence ID" value="AAA58458.1"/>
    <property type="status" value="JOINED"/>
    <property type="molecule type" value="Genomic_DNA"/>
</dbReference>
<dbReference type="EMBL" id="M29910">
    <property type="protein sequence ID" value="AAA58458.1"/>
    <property type="status" value="JOINED"/>
    <property type="molecule type" value="Genomic_DNA"/>
</dbReference>
<dbReference type="EMBL" id="M29911">
    <property type="protein sequence ID" value="AAA58458.1"/>
    <property type="status" value="JOINED"/>
    <property type="molecule type" value="Genomic_DNA"/>
</dbReference>
<dbReference type="EMBL" id="M29912">
    <property type="protein sequence ID" value="AAA58458.1"/>
    <property type="status" value="JOINED"/>
    <property type="molecule type" value="Genomic_DNA"/>
</dbReference>
<dbReference type="EMBL" id="DQ054598">
    <property type="protein sequence ID" value="AAY43126.1"/>
    <property type="molecule type" value="Genomic_DNA"/>
</dbReference>
<dbReference type="EMBL" id="X14346">
    <property type="protein sequence ID" value="CAA32530.1"/>
    <property type="molecule type" value="mRNA"/>
</dbReference>
<dbReference type="CCDS" id="CCDS11602.1"/>
<dbReference type="PIR" id="A34408">
    <property type="entry name" value="A34408"/>
</dbReference>
<dbReference type="RefSeq" id="NP_000493.1">
    <property type="nucleotide sequence ID" value="NM_000502.6"/>
</dbReference>
<dbReference type="SMR" id="P11678"/>
<dbReference type="BioGRID" id="113893">
    <property type="interactions" value="20"/>
</dbReference>
<dbReference type="FunCoup" id="P11678">
    <property type="interactions" value="59"/>
</dbReference>
<dbReference type="IntAct" id="P11678">
    <property type="interactions" value="9"/>
</dbReference>
<dbReference type="STRING" id="9606.ENSP00000225371"/>
<dbReference type="BindingDB" id="P11678"/>
<dbReference type="ChEMBL" id="CHEMBL2438"/>
<dbReference type="DrugBank" id="DB01065">
    <property type="generic name" value="Melatonin"/>
</dbReference>
<dbReference type="PeroxiBase" id="3317">
    <property type="entry name" value="HsEPO"/>
</dbReference>
<dbReference type="GlyConnect" id="1208">
    <property type="glycosylation" value="4 N-Linked glycans (1 site)"/>
</dbReference>
<dbReference type="GlyCosmos" id="P11678">
    <property type="glycosylation" value="6 sites, 4 glycans"/>
</dbReference>
<dbReference type="GlyGen" id="P11678">
    <property type="glycosylation" value="19 sites, 4 N-linked glycans (1 site)"/>
</dbReference>
<dbReference type="iPTMnet" id="P11678"/>
<dbReference type="PhosphoSitePlus" id="P11678"/>
<dbReference type="BioMuta" id="EPX"/>
<dbReference type="DMDM" id="1352738"/>
<dbReference type="jPOST" id="P11678"/>
<dbReference type="MassIVE" id="P11678"/>
<dbReference type="PaxDb" id="9606-ENSP00000225371"/>
<dbReference type="PeptideAtlas" id="P11678"/>
<dbReference type="ProteomicsDB" id="52797"/>
<dbReference type="Pumba" id="P11678"/>
<dbReference type="TopDownProteomics" id="P11678"/>
<dbReference type="Antibodypedia" id="30927">
    <property type="antibodies" value="384 antibodies from 28 providers"/>
</dbReference>
<dbReference type="DNASU" id="8288"/>
<dbReference type="Ensembl" id="ENST00000225371.6">
    <property type="protein sequence ID" value="ENSP00000225371.5"/>
    <property type="gene ID" value="ENSG00000121053.6"/>
</dbReference>
<dbReference type="GeneID" id="8288"/>
<dbReference type="KEGG" id="hsa:8288"/>
<dbReference type="MANE-Select" id="ENST00000225371.6">
    <property type="protein sequence ID" value="ENSP00000225371.5"/>
    <property type="RefSeq nucleotide sequence ID" value="NM_000502.6"/>
    <property type="RefSeq protein sequence ID" value="NP_000493.1"/>
</dbReference>
<dbReference type="UCSC" id="uc002ivq.4">
    <property type="organism name" value="human"/>
</dbReference>
<dbReference type="AGR" id="HGNC:3423"/>
<dbReference type="CTD" id="8288"/>
<dbReference type="DisGeNET" id="8288"/>
<dbReference type="GeneCards" id="EPX"/>
<dbReference type="HGNC" id="HGNC:3423">
    <property type="gene designation" value="EPX"/>
</dbReference>
<dbReference type="HPA" id="ENSG00000121053">
    <property type="expression patterns" value="Tissue enriched (bone)"/>
</dbReference>
<dbReference type="MalaCards" id="EPX"/>
<dbReference type="MIM" id="131399">
    <property type="type" value="gene"/>
</dbReference>
<dbReference type="MIM" id="261500">
    <property type="type" value="phenotype"/>
</dbReference>
<dbReference type="neXtProt" id="NX_P11678"/>
<dbReference type="OpenTargets" id="ENSG00000121053"/>
<dbReference type="PharmGKB" id="PA27841"/>
<dbReference type="VEuPathDB" id="HostDB:ENSG00000121053"/>
<dbReference type="eggNOG" id="KOG2408">
    <property type="taxonomic scope" value="Eukaryota"/>
</dbReference>
<dbReference type="GeneTree" id="ENSGT00940000156009"/>
<dbReference type="HOGENOM" id="CLU_006087_1_1_1"/>
<dbReference type="InParanoid" id="P11678"/>
<dbReference type="OMA" id="PRWNGDK"/>
<dbReference type="OrthoDB" id="823504at2759"/>
<dbReference type="PAN-GO" id="P11678">
    <property type="GO annotations" value="3 GO annotations based on evolutionary models"/>
</dbReference>
<dbReference type="PhylomeDB" id="P11678"/>
<dbReference type="TreeFam" id="TF314316"/>
<dbReference type="PathwayCommons" id="P11678"/>
<dbReference type="Reactome" id="R-HSA-6798695">
    <property type="pathway name" value="Neutrophil degranulation"/>
</dbReference>
<dbReference type="SignaLink" id="P11678"/>
<dbReference type="SIGNOR" id="P11678"/>
<dbReference type="BioGRID-ORCS" id="8288">
    <property type="hits" value="30 hits in 1153 CRISPR screens"/>
</dbReference>
<dbReference type="CD-CODE" id="FB4E32DD">
    <property type="entry name" value="Presynaptic clusters and postsynaptic densities"/>
</dbReference>
<dbReference type="ChiTaRS" id="EPX">
    <property type="organism name" value="human"/>
</dbReference>
<dbReference type="GeneWiki" id="Eosinophil_peroxidase"/>
<dbReference type="GenomeRNAi" id="8288"/>
<dbReference type="Pharos" id="P11678">
    <property type="development level" value="Tchem"/>
</dbReference>
<dbReference type="PRO" id="PR:P11678"/>
<dbReference type="Proteomes" id="UP000005640">
    <property type="component" value="Chromosome 17"/>
</dbReference>
<dbReference type="RNAct" id="P11678">
    <property type="molecule type" value="protein"/>
</dbReference>
<dbReference type="Bgee" id="ENSG00000121053">
    <property type="expression patterns" value="Expressed in male germ line stem cell (sensu Vertebrata) in testis and 78 other cell types or tissues"/>
</dbReference>
<dbReference type="GO" id="GO:0070062">
    <property type="term" value="C:extracellular exosome"/>
    <property type="evidence" value="ECO:0007005"/>
    <property type="project" value="UniProtKB"/>
</dbReference>
<dbReference type="GO" id="GO:0005576">
    <property type="term" value="C:extracellular region"/>
    <property type="evidence" value="ECO:0000304"/>
    <property type="project" value="Reactome"/>
</dbReference>
<dbReference type="GO" id="GO:0005615">
    <property type="term" value="C:extracellular space"/>
    <property type="evidence" value="ECO:0000318"/>
    <property type="project" value="GO_Central"/>
</dbReference>
<dbReference type="GO" id="GO:0034774">
    <property type="term" value="C:secretory granule lumen"/>
    <property type="evidence" value="ECO:0000304"/>
    <property type="project" value="Reactome"/>
</dbReference>
<dbReference type="GO" id="GO:0020037">
    <property type="term" value="F:heme binding"/>
    <property type="evidence" value="ECO:0007669"/>
    <property type="project" value="InterPro"/>
</dbReference>
<dbReference type="GO" id="GO:0140825">
    <property type="term" value="F:lactoperoxidase activity"/>
    <property type="evidence" value="ECO:0007669"/>
    <property type="project" value="UniProtKB-EC"/>
</dbReference>
<dbReference type="GO" id="GO:0046872">
    <property type="term" value="F:metal ion binding"/>
    <property type="evidence" value="ECO:0007669"/>
    <property type="project" value="UniProtKB-KW"/>
</dbReference>
<dbReference type="GO" id="GO:0004601">
    <property type="term" value="F:peroxidase activity"/>
    <property type="evidence" value="ECO:0000318"/>
    <property type="project" value="GO_Central"/>
</dbReference>
<dbReference type="GO" id="GO:0042742">
    <property type="term" value="P:defense response to bacterium"/>
    <property type="evidence" value="ECO:0000318"/>
    <property type="project" value="GO_Central"/>
</dbReference>
<dbReference type="GO" id="GO:0002215">
    <property type="term" value="P:defense response to nematode"/>
    <property type="evidence" value="ECO:0007669"/>
    <property type="project" value="Ensembl"/>
</dbReference>
<dbReference type="GO" id="GO:0072677">
    <property type="term" value="P:eosinophil migration"/>
    <property type="evidence" value="ECO:0007669"/>
    <property type="project" value="Ensembl"/>
</dbReference>
<dbReference type="GO" id="GO:0042744">
    <property type="term" value="P:hydrogen peroxide catabolic process"/>
    <property type="evidence" value="ECO:0007669"/>
    <property type="project" value="UniProtKB-KW"/>
</dbReference>
<dbReference type="GO" id="GO:0032693">
    <property type="term" value="P:negative regulation of interleukin-10 production"/>
    <property type="evidence" value="ECO:0007669"/>
    <property type="project" value="Ensembl"/>
</dbReference>
<dbReference type="GO" id="GO:0032714">
    <property type="term" value="P:negative regulation of interleukin-5 production"/>
    <property type="evidence" value="ECO:0007669"/>
    <property type="project" value="Ensembl"/>
</dbReference>
<dbReference type="GO" id="GO:0010936">
    <property type="term" value="P:negative regulation of macrophage cytokine production"/>
    <property type="evidence" value="ECO:0007669"/>
    <property type="project" value="Ensembl"/>
</dbReference>
<dbReference type="GO" id="GO:0032753">
    <property type="term" value="P:positive regulation of interleukin-4 production"/>
    <property type="evidence" value="ECO:0007669"/>
    <property type="project" value="Ensembl"/>
</dbReference>
<dbReference type="GO" id="GO:0006979">
    <property type="term" value="P:response to oxidative stress"/>
    <property type="evidence" value="ECO:0007669"/>
    <property type="project" value="InterPro"/>
</dbReference>
<dbReference type="CDD" id="cd09824">
    <property type="entry name" value="myeloperoxidase_like"/>
    <property type="match status" value="1"/>
</dbReference>
<dbReference type="FunFam" id="1.10.640.10:FF:000001">
    <property type="entry name" value="Peroxidasin homolog"/>
    <property type="match status" value="1"/>
</dbReference>
<dbReference type="Gene3D" id="1.10.640.10">
    <property type="entry name" value="Haem peroxidase domain superfamily, animal type"/>
    <property type="match status" value="1"/>
</dbReference>
<dbReference type="InterPro" id="IPR019791">
    <property type="entry name" value="Haem_peroxidase_animal"/>
</dbReference>
<dbReference type="InterPro" id="IPR010255">
    <property type="entry name" value="Haem_peroxidase_sf"/>
</dbReference>
<dbReference type="InterPro" id="IPR037120">
    <property type="entry name" value="Haem_peroxidase_sf_animal"/>
</dbReference>
<dbReference type="PANTHER" id="PTHR11475:SF63">
    <property type="entry name" value="EOSINOPHIL PEROXIDASE"/>
    <property type="match status" value="1"/>
</dbReference>
<dbReference type="PANTHER" id="PTHR11475">
    <property type="entry name" value="OXIDASE/PEROXIDASE"/>
    <property type="match status" value="1"/>
</dbReference>
<dbReference type="Pfam" id="PF03098">
    <property type="entry name" value="An_peroxidase"/>
    <property type="match status" value="1"/>
</dbReference>
<dbReference type="PRINTS" id="PR00457">
    <property type="entry name" value="ANPEROXIDASE"/>
</dbReference>
<dbReference type="SUPFAM" id="SSF48113">
    <property type="entry name" value="Heme-dependent peroxidases"/>
    <property type="match status" value="1"/>
</dbReference>
<dbReference type="PROSITE" id="PS00435">
    <property type="entry name" value="PEROXIDASE_1"/>
    <property type="match status" value="1"/>
</dbReference>
<dbReference type="PROSITE" id="PS50292">
    <property type="entry name" value="PEROXIDASE_3"/>
    <property type="match status" value="1"/>
</dbReference>